<dbReference type="EMBL" id="DP000182">
    <property type="protein sequence ID" value="ABI93637.1"/>
    <property type="molecule type" value="Genomic_DNA"/>
</dbReference>
<dbReference type="RefSeq" id="XP_058580501.1">
    <property type="nucleotide sequence ID" value="XM_058724518.1"/>
</dbReference>
<dbReference type="SMR" id="Q07E39"/>
<dbReference type="GeneID" id="131509097"/>
<dbReference type="GO" id="GO:0005901">
    <property type="term" value="C:caveola"/>
    <property type="evidence" value="ECO:0000250"/>
    <property type="project" value="UniProtKB"/>
</dbReference>
<dbReference type="GO" id="GO:0031410">
    <property type="term" value="C:cytoplasmic vesicle"/>
    <property type="evidence" value="ECO:0007669"/>
    <property type="project" value="TreeGrafter"/>
</dbReference>
<dbReference type="GO" id="GO:0005925">
    <property type="term" value="C:focal adhesion"/>
    <property type="evidence" value="ECO:0007669"/>
    <property type="project" value="TreeGrafter"/>
</dbReference>
<dbReference type="GO" id="GO:0000139">
    <property type="term" value="C:Golgi membrane"/>
    <property type="evidence" value="ECO:0007669"/>
    <property type="project" value="UniProtKB-SubCell"/>
</dbReference>
<dbReference type="GO" id="GO:0005634">
    <property type="term" value="C:nucleus"/>
    <property type="evidence" value="ECO:0007669"/>
    <property type="project" value="UniProtKB-SubCell"/>
</dbReference>
<dbReference type="GO" id="GO:0048471">
    <property type="term" value="C:perinuclear region of cytoplasm"/>
    <property type="evidence" value="ECO:0000250"/>
    <property type="project" value="UniProtKB"/>
</dbReference>
<dbReference type="GO" id="GO:0044853">
    <property type="term" value="C:plasma membrane raft"/>
    <property type="evidence" value="ECO:0000250"/>
    <property type="project" value="UniProtKB"/>
</dbReference>
<dbReference type="GO" id="GO:0042383">
    <property type="term" value="C:sarcolemma"/>
    <property type="evidence" value="ECO:0007669"/>
    <property type="project" value="TreeGrafter"/>
</dbReference>
<dbReference type="GO" id="GO:0031748">
    <property type="term" value="F:D1 dopamine receptor binding"/>
    <property type="evidence" value="ECO:0000250"/>
    <property type="project" value="UniProtKB"/>
</dbReference>
<dbReference type="GO" id="GO:0060090">
    <property type="term" value="F:molecular adaptor activity"/>
    <property type="evidence" value="ECO:0007669"/>
    <property type="project" value="TreeGrafter"/>
</dbReference>
<dbReference type="GO" id="GO:0019901">
    <property type="term" value="F:protein kinase binding"/>
    <property type="evidence" value="ECO:0007669"/>
    <property type="project" value="TreeGrafter"/>
</dbReference>
<dbReference type="GO" id="GO:0070836">
    <property type="term" value="P:caveola assembly"/>
    <property type="evidence" value="ECO:0000250"/>
    <property type="project" value="UniProtKB"/>
</dbReference>
<dbReference type="GO" id="GO:0007029">
    <property type="term" value="P:endoplasmic reticulum organization"/>
    <property type="evidence" value="ECO:0000250"/>
    <property type="project" value="UniProtKB"/>
</dbReference>
<dbReference type="GO" id="GO:0008286">
    <property type="term" value="P:insulin receptor signaling pathway"/>
    <property type="evidence" value="ECO:0007669"/>
    <property type="project" value="TreeGrafter"/>
</dbReference>
<dbReference type="GO" id="GO:0007005">
    <property type="term" value="P:mitochondrion organization"/>
    <property type="evidence" value="ECO:0000250"/>
    <property type="project" value="UniProtKB"/>
</dbReference>
<dbReference type="GO" id="GO:0001937">
    <property type="term" value="P:negative regulation of endothelial cell proliferation"/>
    <property type="evidence" value="ECO:0000250"/>
    <property type="project" value="UniProtKB"/>
</dbReference>
<dbReference type="GO" id="GO:0060161">
    <property type="term" value="P:positive regulation of dopamine receptor signaling pathway"/>
    <property type="evidence" value="ECO:0000250"/>
    <property type="project" value="UniProtKB"/>
</dbReference>
<dbReference type="GO" id="GO:0051480">
    <property type="term" value="P:regulation of cytosolic calcium ion concentration"/>
    <property type="evidence" value="ECO:0007669"/>
    <property type="project" value="TreeGrafter"/>
</dbReference>
<dbReference type="GO" id="GO:0048741">
    <property type="term" value="P:skeletal muscle fiber development"/>
    <property type="evidence" value="ECO:0000250"/>
    <property type="project" value="UniProtKB"/>
</dbReference>
<dbReference type="GO" id="GO:0048278">
    <property type="term" value="P:vesicle docking"/>
    <property type="evidence" value="ECO:0000250"/>
    <property type="project" value="UniProtKB"/>
</dbReference>
<dbReference type="GO" id="GO:0006906">
    <property type="term" value="P:vesicle fusion"/>
    <property type="evidence" value="ECO:0000250"/>
    <property type="project" value="UniProtKB"/>
</dbReference>
<dbReference type="InterPro" id="IPR001612">
    <property type="entry name" value="Caveolin"/>
</dbReference>
<dbReference type="InterPro" id="IPR018361">
    <property type="entry name" value="Caveolin_CS"/>
</dbReference>
<dbReference type="PANTHER" id="PTHR10844">
    <property type="entry name" value="CAVEOLIN"/>
    <property type="match status" value="1"/>
</dbReference>
<dbReference type="PANTHER" id="PTHR10844:SF3">
    <property type="entry name" value="CAVEOLIN-2"/>
    <property type="match status" value="1"/>
</dbReference>
<dbReference type="Pfam" id="PF01146">
    <property type="entry name" value="Caveolin"/>
    <property type="match status" value="1"/>
</dbReference>
<dbReference type="PROSITE" id="PS01210">
    <property type="entry name" value="CAVEOLIN"/>
    <property type="match status" value="1"/>
</dbReference>
<keyword id="KW-1003">Cell membrane</keyword>
<keyword id="KW-0963">Cytoplasm</keyword>
<keyword id="KW-0333">Golgi apparatus</keyword>
<keyword id="KW-0472">Membrane</keyword>
<keyword id="KW-0539">Nucleus</keyword>
<keyword id="KW-0597">Phosphoprotein</keyword>
<reference key="1">
    <citation type="submission" date="2006-09" db="EMBL/GenBank/DDBJ databases">
        <title>NISC comparative sequencing initiative.</title>
        <authorList>
            <person name="Antonellis A."/>
            <person name="Ayele K."/>
            <person name="Benjamin B."/>
            <person name="Blakesley R.W."/>
            <person name="Boakye A."/>
            <person name="Bouffard G.G."/>
            <person name="Brinkley C."/>
            <person name="Brooks S."/>
            <person name="Chu G."/>
            <person name="Coleman H."/>
            <person name="Engle J."/>
            <person name="Gestole M."/>
            <person name="Greene A."/>
            <person name="Guan X."/>
            <person name="Gupta J."/>
            <person name="Haghighi P."/>
            <person name="Han J."/>
            <person name="Hansen N."/>
            <person name="Ho S.-L."/>
            <person name="Hu P."/>
            <person name="Hunter G."/>
            <person name="Hurle B."/>
            <person name="Idol J.R."/>
            <person name="Kwong P."/>
            <person name="Laric P."/>
            <person name="Larson S."/>
            <person name="Lee-Lin S.-Q."/>
            <person name="Legaspi R."/>
            <person name="Madden M."/>
            <person name="Maduro Q.L."/>
            <person name="Maduro V.B."/>
            <person name="Margulies E.H."/>
            <person name="Masiello C."/>
            <person name="Maskeri B."/>
            <person name="McDowell J."/>
            <person name="Mojidi H.A."/>
            <person name="Mullikin J.C."/>
            <person name="Oestreicher J.S."/>
            <person name="Park M."/>
            <person name="Portnoy M.E."/>
            <person name="Prasad A."/>
            <person name="Puri O."/>
            <person name="Reddix-Dugue N."/>
            <person name="Schandler K."/>
            <person name="Schueler M.G."/>
            <person name="Sison C."/>
            <person name="Stantripop S."/>
            <person name="Stephen E."/>
            <person name="Taye A."/>
            <person name="Thomas J.W."/>
            <person name="Thomas P.J."/>
            <person name="Tsipouri V."/>
            <person name="Ung L."/>
            <person name="Vogt J.L."/>
            <person name="Wetherby K.D."/>
            <person name="Young A."/>
            <person name="Green E.D."/>
        </authorList>
    </citation>
    <scope>NUCLEOTIDE SEQUENCE [LARGE SCALE GENOMIC DNA]</scope>
</reference>
<feature type="chain" id="PRO_0000260382" description="Caveolin-2">
    <location>
        <begin position="1"/>
        <end position="162"/>
    </location>
</feature>
<feature type="topological domain" description="Cytoplasmic" evidence="4">
    <location>
        <begin position="1"/>
        <end position="86"/>
    </location>
</feature>
<feature type="intramembrane region" description="Helical" evidence="4">
    <location>
        <begin position="87"/>
        <end position="107"/>
    </location>
</feature>
<feature type="topological domain" description="Cytoplasmic" evidence="4">
    <location>
        <begin position="108"/>
        <end position="162"/>
    </location>
</feature>
<feature type="modified residue" description="Phosphotyrosine; by SRC" evidence="2">
    <location>
        <position position="19"/>
    </location>
</feature>
<feature type="modified residue" description="Phosphoserine" evidence="3">
    <location>
        <position position="20"/>
    </location>
</feature>
<feature type="modified residue" description="Phosphoserine" evidence="2">
    <location>
        <position position="23"/>
    </location>
</feature>
<feature type="modified residue" description="Phosphotyrosine; by SRC" evidence="2">
    <location>
        <position position="27"/>
    </location>
</feature>
<feature type="modified residue" description="Phosphoserine" evidence="2">
    <location>
        <position position="36"/>
    </location>
</feature>
<sequence>MGLETEKADVQLFMDDDSYSRHSGVDYADPDKFADSGSDRDPHRLNSNLKVGFEDVIAEPVSTHSFDKVWICSHALFEISKYVIYKFLTLFLAIPLAFAAGILFATLSCLHIWIIMPFVKTCLMVLPSVQTIWKSITDVVIAPLCTSVGRSFSSVSLQLSHD</sequence>
<proteinExistence type="inferred from homology"/>
<protein>
    <recommendedName>
        <fullName>Caveolin-2</fullName>
    </recommendedName>
</protein>
<name>CAV2_NEONE</name>
<comment type="function">
    <text evidence="1">May act as a scaffolding protein within caveolar membranes. Interacts directly with G-protein alpha subunits and can functionally regulate their activity. Acts as an accessory protein in conjunction with CAV1 in targeting to lipid rafts and driving caveolae formation. The Ser-36 phosphorylated form has a role in modulating mitosis in endothelial cells. Positive regulator of cellular mitogenesis of the MAPK signaling pathway. Required for the insulin-stimulated nuclear translocation and activation of MAPK1 and STAT3, and the subsequent regulation of cell cycle progression (By similarity).</text>
</comment>
<comment type="subunit">
    <text evidence="1">Monomer or homodimer (By similarity). Interacts with CAV1; the interaction forms a stable heterooligomeric complex that is required for targeting to lipid rafts and for caveolae formation. Tyrosine phosphorylated forms do not form heterooligomers with the Tyr-19-phosphorylated form existing as a monomer or dimer, and the Tyr-27-form as a monomer only. Interacts (tyrosine phosphorylated form) with the SH2 domain-containing proteins, RASA1, NCK1 and SRC. Interacts (tyrosine phosphorylated form) with INSR, the interaction (Tyr-27-phosphorylated form) is increased on insulin stimulation. Interacts (Tyr-19 phosphorylated form) with MAPK1 (phosphorylated form); the interaction, promoted by insulin, leads to nuclear location and MAPK1 activation. Interacts with STAT3; the interaction is increased on insulin-induced tyrosine phosphorylation leading to STAT activation (By similarity).</text>
</comment>
<comment type="subcellular location">
    <subcellularLocation>
        <location evidence="1">Nucleus</location>
    </subcellularLocation>
    <subcellularLocation>
        <location evidence="1">Cytoplasm</location>
    </subcellularLocation>
    <subcellularLocation>
        <location>Golgi apparatus membrane</location>
        <topology>Peripheral membrane protein</topology>
    </subcellularLocation>
    <subcellularLocation>
        <location>Cell membrane</location>
        <topology>Peripheral membrane protein</topology>
    </subcellularLocation>
    <subcellularLocation>
        <location>Membrane</location>
        <location>Caveola</location>
        <topology>Peripheral membrane protein</topology>
    </subcellularLocation>
    <text evidence="1">Potential hairpin-like structure in the membrane. Membrane protein of caveolae. Tyr-19-phosphorylated form is enriched at sites of cell-cell contact and is translocated to the nucleus in complex with MAPK1 in response to insulin (By similarity). Tyr-27-phosphorylated form is located both in the cytoplasm and plasma membrane. CAV1-mediated Ser-23-phosphorylated form locates to the plasma membrane. Ser-36-phosphorylated form resides in intracellular compartments.</text>
</comment>
<comment type="PTM">
    <text evidence="1">Phosphorylated on serine and tyrosine residues. CAV1 promotes phosphorylation on Ser-23 which then targets the complex to the plasma membrane, lipid rafts and caveolae. Phosphorylation on Ser-36 appears to modulate mitosis in endothelial cells (By similarity). Phosphorylation on both Tyr-19 and Tyr-27 is required for insulin-induced 'Ser-727' phosphorylation of STAT3 and its activation. Phosphorylation on Tyr-19 is required for insulin-induced phosphorylation of MAPK1 and DNA binding of STAT3. Tyrosine phosphorylation is induced by both EGF and insulin (By. similarity).</text>
</comment>
<comment type="similarity">
    <text evidence="5">Belongs to the caveolin family.</text>
</comment>
<gene>
    <name type="primary">CAV2</name>
</gene>
<organism>
    <name type="scientific">Neofelis nebulosa</name>
    <name type="common">Clouded leopard</name>
    <dbReference type="NCBI Taxonomy" id="61452"/>
    <lineage>
        <taxon>Eukaryota</taxon>
        <taxon>Metazoa</taxon>
        <taxon>Chordata</taxon>
        <taxon>Craniata</taxon>
        <taxon>Vertebrata</taxon>
        <taxon>Euteleostomi</taxon>
        <taxon>Mammalia</taxon>
        <taxon>Eutheria</taxon>
        <taxon>Laurasiatheria</taxon>
        <taxon>Carnivora</taxon>
        <taxon>Feliformia</taxon>
        <taxon>Felidae</taxon>
        <taxon>Pantherinae</taxon>
        <taxon>Neofelis</taxon>
    </lineage>
</organism>
<accession>Q07E39</accession>
<evidence type="ECO:0000250" key="1"/>
<evidence type="ECO:0000250" key="2">
    <source>
        <dbReference type="UniProtKB" id="P51636"/>
    </source>
</evidence>
<evidence type="ECO:0000250" key="3">
    <source>
        <dbReference type="UniProtKB" id="Q9WVC3"/>
    </source>
</evidence>
<evidence type="ECO:0000255" key="4"/>
<evidence type="ECO:0000305" key="5"/>